<sequence length="67" mass="7577">MSLELLSQLETKIQTALETIELLKLELDEEKEKAANLAEQNHQLKQELSSWNDKITGLVGLLSNQVD</sequence>
<name>ZAPB_SHEAM</name>
<feature type="chain" id="PRO_0000333921" description="Cell division protein ZapB">
    <location>
        <begin position="1"/>
        <end position="67"/>
    </location>
</feature>
<feature type="coiled-coil region" evidence="1">
    <location>
        <begin position="3"/>
        <end position="59"/>
    </location>
</feature>
<comment type="function">
    <text evidence="1">Non-essential, abundant cell division factor that is required for proper Z-ring formation. It is recruited early to the divisome by direct interaction with FtsZ, stimulating Z-ring assembly and thereby promoting cell division earlier in the cell cycle. Its recruitment to the Z-ring requires functional FtsA or ZipA.</text>
</comment>
<comment type="subunit">
    <text evidence="1">Homodimer. The ends of the coiled-coil dimer bind to each other, forming polymers. Interacts with FtsZ.</text>
</comment>
<comment type="subcellular location">
    <subcellularLocation>
        <location>Cytoplasm</location>
    </subcellularLocation>
    <text evidence="1">Localizes to the septum at mid-cell, in a FtsZ-like pattern.</text>
</comment>
<comment type="similarity">
    <text evidence="1">Belongs to the ZapB family.</text>
</comment>
<proteinExistence type="inferred from homology"/>
<evidence type="ECO:0000255" key="1">
    <source>
        <dbReference type="HAMAP-Rule" id="MF_01196"/>
    </source>
</evidence>
<keyword id="KW-0131">Cell cycle</keyword>
<keyword id="KW-0132">Cell division</keyword>
<keyword id="KW-0175">Coiled coil</keyword>
<keyword id="KW-0963">Cytoplasm</keyword>
<keyword id="KW-1185">Reference proteome</keyword>
<keyword id="KW-0717">Septation</keyword>
<accession>A1SAW5</accession>
<gene>
    <name evidence="1" type="primary">zapB</name>
    <name type="ordered locus">Sama_3319</name>
</gene>
<dbReference type="EMBL" id="CP000507">
    <property type="protein sequence ID" value="ABM01522.1"/>
    <property type="molecule type" value="Genomic_DNA"/>
</dbReference>
<dbReference type="RefSeq" id="WP_011761426.1">
    <property type="nucleotide sequence ID" value="NC_008700.1"/>
</dbReference>
<dbReference type="SMR" id="A1SAW5"/>
<dbReference type="STRING" id="326297.Sama_3319"/>
<dbReference type="KEGG" id="saz:Sama_3319"/>
<dbReference type="eggNOG" id="COG3074">
    <property type="taxonomic scope" value="Bacteria"/>
</dbReference>
<dbReference type="HOGENOM" id="CLU_171174_1_0_6"/>
<dbReference type="Proteomes" id="UP000009175">
    <property type="component" value="Chromosome"/>
</dbReference>
<dbReference type="GO" id="GO:0005737">
    <property type="term" value="C:cytoplasm"/>
    <property type="evidence" value="ECO:0007669"/>
    <property type="project" value="UniProtKB-SubCell"/>
</dbReference>
<dbReference type="GO" id="GO:0000917">
    <property type="term" value="P:division septum assembly"/>
    <property type="evidence" value="ECO:0007669"/>
    <property type="project" value="UniProtKB-KW"/>
</dbReference>
<dbReference type="GO" id="GO:0043093">
    <property type="term" value="P:FtsZ-dependent cytokinesis"/>
    <property type="evidence" value="ECO:0007669"/>
    <property type="project" value="UniProtKB-UniRule"/>
</dbReference>
<dbReference type="Gene3D" id="1.20.5.340">
    <property type="match status" value="1"/>
</dbReference>
<dbReference type="HAMAP" id="MF_01196">
    <property type="entry name" value="ZapB"/>
    <property type="match status" value="1"/>
</dbReference>
<dbReference type="InterPro" id="IPR009252">
    <property type="entry name" value="Cell_div_ZapB"/>
</dbReference>
<dbReference type="Pfam" id="PF06005">
    <property type="entry name" value="ZapB"/>
    <property type="match status" value="1"/>
</dbReference>
<organism>
    <name type="scientific">Shewanella amazonensis (strain ATCC BAA-1098 / SB2B)</name>
    <dbReference type="NCBI Taxonomy" id="326297"/>
    <lineage>
        <taxon>Bacteria</taxon>
        <taxon>Pseudomonadati</taxon>
        <taxon>Pseudomonadota</taxon>
        <taxon>Gammaproteobacteria</taxon>
        <taxon>Alteromonadales</taxon>
        <taxon>Shewanellaceae</taxon>
        <taxon>Shewanella</taxon>
    </lineage>
</organism>
<protein>
    <recommendedName>
        <fullName evidence="1">Cell division protein ZapB</fullName>
    </recommendedName>
</protein>
<reference key="1">
    <citation type="submission" date="2006-12" db="EMBL/GenBank/DDBJ databases">
        <title>Complete sequence of Shewanella amazonensis SB2B.</title>
        <authorList>
            <consortium name="US DOE Joint Genome Institute"/>
            <person name="Copeland A."/>
            <person name="Lucas S."/>
            <person name="Lapidus A."/>
            <person name="Barry K."/>
            <person name="Detter J.C."/>
            <person name="Glavina del Rio T."/>
            <person name="Hammon N."/>
            <person name="Israni S."/>
            <person name="Dalin E."/>
            <person name="Tice H."/>
            <person name="Pitluck S."/>
            <person name="Munk A.C."/>
            <person name="Brettin T."/>
            <person name="Bruce D."/>
            <person name="Han C."/>
            <person name="Tapia R."/>
            <person name="Gilna P."/>
            <person name="Schmutz J."/>
            <person name="Larimer F."/>
            <person name="Land M."/>
            <person name="Hauser L."/>
            <person name="Kyrpides N."/>
            <person name="Mikhailova N."/>
            <person name="Fredrickson J."/>
            <person name="Richardson P."/>
        </authorList>
    </citation>
    <scope>NUCLEOTIDE SEQUENCE [LARGE SCALE GENOMIC DNA]</scope>
    <source>
        <strain>ATCC BAA-1098 / SB2B</strain>
    </source>
</reference>